<organism>
    <name type="scientific">Geobacter sulfurreducens (strain ATCC 51573 / DSM 12127 / PCA)</name>
    <dbReference type="NCBI Taxonomy" id="243231"/>
    <lineage>
        <taxon>Bacteria</taxon>
        <taxon>Pseudomonadati</taxon>
        <taxon>Thermodesulfobacteriota</taxon>
        <taxon>Desulfuromonadia</taxon>
        <taxon>Geobacterales</taxon>
        <taxon>Geobacteraceae</taxon>
        <taxon>Geobacter</taxon>
    </lineage>
</organism>
<comment type="function">
    <text evidence="1">Component of the acetyl coenzyme A carboxylase (ACC) complex. First, biotin carboxylase catalyzes the carboxylation of biotin on its carrier protein (BCCP) and then the CO(2) group is transferred by the carboxyltransferase to acetyl-CoA to form malonyl-CoA.</text>
</comment>
<comment type="catalytic activity">
    <reaction evidence="1">
        <text>N(6)-carboxybiotinyl-L-lysyl-[protein] + acetyl-CoA = N(6)-biotinyl-L-lysyl-[protein] + malonyl-CoA</text>
        <dbReference type="Rhea" id="RHEA:54728"/>
        <dbReference type="Rhea" id="RHEA-COMP:10505"/>
        <dbReference type="Rhea" id="RHEA-COMP:10506"/>
        <dbReference type="ChEBI" id="CHEBI:57288"/>
        <dbReference type="ChEBI" id="CHEBI:57384"/>
        <dbReference type="ChEBI" id="CHEBI:83144"/>
        <dbReference type="ChEBI" id="CHEBI:83145"/>
        <dbReference type="EC" id="2.1.3.15"/>
    </reaction>
</comment>
<comment type="pathway">
    <text evidence="1">Lipid metabolism; malonyl-CoA biosynthesis; malonyl-CoA from acetyl-CoA: step 1/1.</text>
</comment>
<comment type="subunit">
    <text evidence="1">Acetyl-CoA carboxylase is a heterohexamer composed of biotin carboxyl carrier protein (AccB), biotin carboxylase (AccC) and two subunits each of ACCase subunit alpha (AccA) and ACCase subunit beta (AccD).</text>
</comment>
<comment type="subcellular location">
    <subcellularLocation>
        <location evidence="1">Cytoplasm</location>
    </subcellularLocation>
</comment>
<comment type="similarity">
    <text evidence="1">Belongs to the AccA family.</text>
</comment>
<sequence length="319" mass="35524">MAAQYYMEFEKPVVELEKKVQELAELAGTNAELAGEVTKLEKKVDRMREVIFSNLSRWQTVQVARHIERPFTLDYLNLIFTDFTELHGDRLFGDDHAIVAGLAKLDGEPVVVIGHQKGRDTKEKVYRNFGMPNPEGYRKALRIMELAERFRLPIITFVDTPGAFPGIGAEERGQAEAIARNLREMAALTVPIIVVVTGEGGSGGALAIAVGDRVLMLQYSIYAVISPEGCAAILWSDGTKGEQAAEALKLTAKDLKELEVIDEIVPEPLGGAHRDHEAMARTLHEAIARQLKELKAIPAEQLVEERYQKFRKMSRFIEG</sequence>
<feature type="chain" id="PRO_0000223772" description="Acetyl-coenzyme A carboxylase carboxyl transferase subunit alpha">
    <location>
        <begin position="1"/>
        <end position="319"/>
    </location>
</feature>
<feature type="domain" description="CoA carboxyltransferase C-terminal" evidence="2">
    <location>
        <begin position="39"/>
        <end position="293"/>
    </location>
</feature>
<dbReference type="EC" id="2.1.3.15" evidence="1"/>
<dbReference type="EMBL" id="AE017180">
    <property type="protein sequence ID" value="AAR34777.2"/>
    <property type="molecule type" value="Genomic_DNA"/>
</dbReference>
<dbReference type="RefSeq" id="NP_952454.4">
    <property type="nucleotide sequence ID" value="NC_002939.5"/>
</dbReference>
<dbReference type="RefSeq" id="WP_010942051.1">
    <property type="nucleotide sequence ID" value="NC_002939.5"/>
</dbReference>
<dbReference type="SMR" id="Q74DB5"/>
<dbReference type="FunCoup" id="Q74DB5">
    <property type="interactions" value="504"/>
</dbReference>
<dbReference type="STRING" id="243231.GSU1402"/>
<dbReference type="EnsemblBacteria" id="AAR34777">
    <property type="protein sequence ID" value="AAR34777"/>
    <property type="gene ID" value="GSU1402"/>
</dbReference>
<dbReference type="KEGG" id="gsu:GSU1402"/>
<dbReference type="PATRIC" id="fig|243231.5.peg.1449"/>
<dbReference type="eggNOG" id="COG0825">
    <property type="taxonomic scope" value="Bacteria"/>
</dbReference>
<dbReference type="HOGENOM" id="CLU_015486_0_2_7"/>
<dbReference type="InParanoid" id="Q74DB5"/>
<dbReference type="OrthoDB" id="9808023at2"/>
<dbReference type="UniPathway" id="UPA00655">
    <property type="reaction ID" value="UER00711"/>
</dbReference>
<dbReference type="Proteomes" id="UP000000577">
    <property type="component" value="Chromosome"/>
</dbReference>
<dbReference type="GO" id="GO:0009317">
    <property type="term" value="C:acetyl-CoA carboxylase complex"/>
    <property type="evidence" value="ECO:0007669"/>
    <property type="project" value="InterPro"/>
</dbReference>
<dbReference type="GO" id="GO:0003989">
    <property type="term" value="F:acetyl-CoA carboxylase activity"/>
    <property type="evidence" value="ECO:0007669"/>
    <property type="project" value="InterPro"/>
</dbReference>
<dbReference type="GO" id="GO:0005524">
    <property type="term" value="F:ATP binding"/>
    <property type="evidence" value="ECO:0007669"/>
    <property type="project" value="UniProtKB-KW"/>
</dbReference>
<dbReference type="GO" id="GO:0016743">
    <property type="term" value="F:carboxyl- or carbamoyltransferase activity"/>
    <property type="evidence" value="ECO:0007669"/>
    <property type="project" value="UniProtKB-UniRule"/>
</dbReference>
<dbReference type="GO" id="GO:0006633">
    <property type="term" value="P:fatty acid biosynthetic process"/>
    <property type="evidence" value="ECO:0007669"/>
    <property type="project" value="UniProtKB-KW"/>
</dbReference>
<dbReference type="GO" id="GO:2001295">
    <property type="term" value="P:malonyl-CoA biosynthetic process"/>
    <property type="evidence" value="ECO:0007669"/>
    <property type="project" value="UniProtKB-UniRule"/>
</dbReference>
<dbReference type="Gene3D" id="3.90.226.10">
    <property type="entry name" value="2-enoyl-CoA Hydratase, Chain A, domain 1"/>
    <property type="match status" value="1"/>
</dbReference>
<dbReference type="HAMAP" id="MF_00823">
    <property type="entry name" value="AcetylCoA_CT_alpha"/>
    <property type="match status" value="1"/>
</dbReference>
<dbReference type="InterPro" id="IPR001095">
    <property type="entry name" value="Acetyl_CoA_COase_a_su"/>
</dbReference>
<dbReference type="InterPro" id="IPR029045">
    <property type="entry name" value="ClpP/crotonase-like_dom_sf"/>
</dbReference>
<dbReference type="InterPro" id="IPR011763">
    <property type="entry name" value="COA_CT_C"/>
</dbReference>
<dbReference type="NCBIfam" id="TIGR00513">
    <property type="entry name" value="accA"/>
    <property type="match status" value="1"/>
</dbReference>
<dbReference type="NCBIfam" id="NF041504">
    <property type="entry name" value="AccA_sub"/>
    <property type="match status" value="1"/>
</dbReference>
<dbReference type="NCBIfam" id="NF004344">
    <property type="entry name" value="PRK05724.1"/>
    <property type="match status" value="1"/>
</dbReference>
<dbReference type="PANTHER" id="PTHR42853">
    <property type="entry name" value="ACETYL-COENZYME A CARBOXYLASE CARBOXYL TRANSFERASE SUBUNIT ALPHA"/>
    <property type="match status" value="1"/>
</dbReference>
<dbReference type="PANTHER" id="PTHR42853:SF3">
    <property type="entry name" value="ACETYL-COENZYME A CARBOXYLASE CARBOXYL TRANSFERASE SUBUNIT ALPHA, CHLOROPLASTIC"/>
    <property type="match status" value="1"/>
</dbReference>
<dbReference type="Pfam" id="PF03255">
    <property type="entry name" value="ACCA"/>
    <property type="match status" value="1"/>
</dbReference>
<dbReference type="PRINTS" id="PR01069">
    <property type="entry name" value="ACCCTRFRASEA"/>
</dbReference>
<dbReference type="SUPFAM" id="SSF52096">
    <property type="entry name" value="ClpP/crotonase"/>
    <property type="match status" value="1"/>
</dbReference>
<dbReference type="PROSITE" id="PS50989">
    <property type="entry name" value="COA_CT_CTER"/>
    <property type="match status" value="1"/>
</dbReference>
<name>ACCA_GEOSL</name>
<keyword id="KW-0067">ATP-binding</keyword>
<keyword id="KW-0963">Cytoplasm</keyword>
<keyword id="KW-0275">Fatty acid biosynthesis</keyword>
<keyword id="KW-0276">Fatty acid metabolism</keyword>
<keyword id="KW-0444">Lipid biosynthesis</keyword>
<keyword id="KW-0443">Lipid metabolism</keyword>
<keyword id="KW-0547">Nucleotide-binding</keyword>
<keyword id="KW-1185">Reference proteome</keyword>
<keyword id="KW-0808">Transferase</keyword>
<proteinExistence type="inferred from homology"/>
<reference key="1">
    <citation type="journal article" date="2003" name="Science">
        <title>Genome of Geobacter sulfurreducens: metal reduction in subsurface environments.</title>
        <authorList>
            <person name="Methe B.A."/>
            <person name="Nelson K.E."/>
            <person name="Eisen J.A."/>
            <person name="Paulsen I.T."/>
            <person name="Nelson W.C."/>
            <person name="Heidelberg J.F."/>
            <person name="Wu D."/>
            <person name="Wu M."/>
            <person name="Ward N.L."/>
            <person name="Beanan M.J."/>
            <person name="Dodson R.J."/>
            <person name="Madupu R."/>
            <person name="Brinkac L.M."/>
            <person name="Daugherty S.C."/>
            <person name="DeBoy R.T."/>
            <person name="Durkin A.S."/>
            <person name="Gwinn M.L."/>
            <person name="Kolonay J.F."/>
            <person name="Sullivan S.A."/>
            <person name="Haft D.H."/>
            <person name="Selengut J."/>
            <person name="Davidsen T.M."/>
            <person name="Zafar N."/>
            <person name="White O."/>
            <person name="Tran B."/>
            <person name="Romero C."/>
            <person name="Forberger H.A."/>
            <person name="Weidman J.F."/>
            <person name="Khouri H.M."/>
            <person name="Feldblyum T.V."/>
            <person name="Utterback T.R."/>
            <person name="Van Aken S.E."/>
            <person name="Lovley D.R."/>
            <person name="Fraser C.M."/>
        </authorList>
    </citation>
    <scope>NUCLEOTIDE SEQUENCE [LARGE SCALE GENOMIC DNA]</scope>
    <source>
        <strain>ATCC 51573 / DSM 12127 / PCA</strain>
    </source>
</reference>
<evidence type="ECO:0000255" key="1">
    <source>
        <dbReference type="HAMAP-Rule" id="MF_00823"/>
    </source>
</evidence>
<evidence type="ECO:0000255" key="2">
    <source>
        <dbReference type="PROSITE-ProRule" id="PRU01137"/>
    </source>
</evidence>
<accession>Q74DB5</accession>
<protein>
    <recommendedName>
        <fullName evidence="1">Acetyl-coenzyme A carboxylase carboxyl transferase subunit alpha</fullName>
        <shortName evidence="1">ACCase subunit alpha</shortName>
        <shortName evidence="1">Acetyl-CoA carboxylase carboxyltransferase subunit alpha</shortName>
        <ecNumber evidence="1">2.1.3.15</ecNumber>
    </recommendedName>
</protein>
<gene>
    <name evidence="1" type="primary">accA</name>
    <name type="ordered locus">GSU1402</name>
</gene>